<feature type="chain" id="PRO_0000065281" description="Uncharacterized protein F08G2.4">
    <location>
        <begin position="1"/>
        <end position="171"/>
    </location>
</feature>
<feature type="region of interest" description="Disordered" evidence="1">
    <location>
        <begin position="123"/>
        <end position="171"/>
    </location>
</feature>
<feature type="compositionally biased region" description="Basic and acidic residues" evidence="1">
    <location>
        <begin position="140"/>
        <end position="171"/>
    </location>
</feature>
<reference key="1">
    <citation type="journal article" date="1998" name="Science">
        <title>Genome sequence of the nematode C. elegans: a platform for investigating biology.</title>
        <authorList>
            <consortium name="The C. elegans sequencing consortium"/>
        </authorList>
    </citation>
    <scope>NUCLEOTIDE SEQUENCE [LARGE SCALE GENOMIC DNA]</scope>
    <source>
        <strain>Bristol N2</strain>
    </source>
</reference>
<reference key="2">
    <citation type="submission" date="2000-08" db="EMBL/GenBank/DDBJ databases">
        <title>The Caenorhabditis elegans transcriptome project, a complementary view of the genome.</title>
        <authorList>
            <person name="Kohara Y."/>
            <person name="Shin-i T."/>
            <person name="Suzuki Y."/>
            <person name="Sugano S."/>
            <person name="Potdevin M."/>
            <person name="Thierry-Mieg Y."/>
            <person name="Thierry-Mieg D."/>
            <person name="Thierry-Mieg J."/>
        </authorList>
    </citation>
    <scope>NUCLEOTIDE SEQUENCE [LARGE SCALE MRNA]</scope>
    <source>
        <strain>Bristol N2</strain>
    </source>
</reference>
<gene>
    <name type="ORF">F08G2.4</name>
</gene>
<name>YS0I_CAEEL</name>
<protein>
    <recommendedName>
        <fullName>Uncharacterized protein F08G2.4</fullName>
    </recommendedName>
</protein>
<keyword id="KW-1185">Reference proteome</keyword>
<evidence type="ECO:0000256" key="1">
    <source>
        <dbReference type="SAM" id="MobiDB-lite"/>
    </source>
</evidence>
<organism>
    <name type="scientific">Caenorhabditis elegans</name>
    <dbReference type="NCBI Taxonomy" id="6239"/>
    <lineage>
        <taxon>Eukaryota</taxon>
        <taxon>Metazoa</taxon>
        <taxon>Ecdysozoa</taxon>
        <taxon>Nematoda</taxon>
        <taxon>Chromadorea</taxon>
        <taxon>Rhabditida</taxon>
        <taxon>Rhabditina</taxon>
        <taxon>Rhabditomorpha</taxon>
        <taxon>Rhabditoidea</taxon>
        <taxon>Rhabditidae</taxon>
        <taxon>Peloderinae</taxon>
        <taxon>Caenorhabditis</taxon>
    </lineage>
</organism>
<sequence length="171" mass="20590">MPDNHKDPPDFNNLEMKLEERIELSREDQDIQSTSSSYPHCEALDHIVSMESTYDFHRQMAHKDLQKHRQEYEKASEKILELRKKLTDWNMDPKKRKWIEDDLDSLVRKQESALSRIRLAEKCTKRDLRNDPPPAYQPDDPLKDLRKNFEKKEKPTWNDVEKKKNGVFEFH</sequence>
<accession>Q9XVA4</accession>
<dbReference type="EMBL" id="Z81495">
    <property type="protein sequence ID" value="CAB04058.1"/>
    <property type="molecule type" value="Genomic_DNA"/>
</dbReference>
<dbReference type="EMBL" id="AF303268">
    <property type="protein sequence ID" value="AAG50226.1"/>
    <property type="molecule type" value="mRNA"/>
</dbReference>
<dbReference type="PIR" id="T20598">
    <property type="entry name" value="T20598"/>
</dbReference>
<dbReference type="RefSeq" id="NP_496900.1">
    <property type="nucleotide sequence ID" value="NM_064499.5"/>
</dbReference>
<dbReference type="SMR" id="Q9XVA4"/>
<dbReference type="BioGRID" id="40321">
    <property type="interactions" value="1"/>
</dbReference>
<dbReference type="FunCoup" id="Q9XVA4">
    <property type="interactions" value="1407"/>
</dbReference>
<dbReference type="IntAct" id="Q9XVA4">
    <property type="interactions" value="1"/>
</dbReference>
<dbReference type="PaxDb" id="6239-F08G2.4"/>
<dbReference type="PeptideAtlas" id="Q9XVA4"/>
<dbReference type="EnsemblMetazoa" id="F08G2.4.1">
    <property type="protein sequence ID" value="F08G2.4.1"/>
    <property type="gene ID" value="WBGene00008576"/>
</dbReference>
<dbReference type="GeneID" id="175035"/>
<dbReference type="KEGG" id="cel:CELE_F08G2.4"/>
<dbReference type="UCSC" id="F08G2.4">
    <property type="organism name" value="c. elegans"/>
</dbReference>
<dbReference type="AGR" id="WB:WBGene00008576"/>
<dbReference type="CTD" id="175035"/>
<dbReference type="WormBase" id="F08G2.4">
    <property type="protein sequence ID" value="CE19776"/>
    <property type="gene ID" value="WBGene00008576"/>
</dbReference>
<dbReference type="eggNOG" id="ENOG502THSE">
    <property type="taxonomic scope" value="Eukaryota"/>
</dbReference>
<dbReference type="HOGENOM" id="CLU_1636994_0_0_1"/>
<dbReference type="InParanoid" id="Q9XVA4"/>
<dbReference type="OMA" id="SSYPHCE"/>
<dbReference type="OrthoDB" id="5784501at2759"/>
<dbReference type="PRO" id="PR:Q9XVA4"/>
<dbReference type="Proteomes" id="UP000001940">
    <property type="component" value="Chromosome II"/>
</dbReference>
<dbReference type="Bgee" id="WBGene00008576">
    <property type="expression patterns" value="Expressed in pharyngeal muscle cell (C elegans) and 4 other cell types or tissues"/>
</dbReference>
<proteinExistence type="evidence at transcript level"/>